<dbReference type="EC" id="6.1.1.19"/>
<dbReference type="EMBL" id="AE000511">
    <property type="protein sequence ID" value="AAD07388.1"/>
    <property type="molecule type" value="Genomic_DNA"/>
</dbReference>
<dbReference type="PIR" id="G64559">
    <property type="entry name" value="G64559"/>
</dbReference>
<dbReference type="RefSeq" id="NP_207117.1">
    <property type="nucleotide sequence ID" value="NC_000915.1"/>
</dbReference>
<dbReference type="RefSeq" id="WP_000557124.1">
    <property type="nucleotide sequence ID" value="NC_018939.1"/>
</dbReference>
<dbReference type="SMR" id="P56128"/>
<dbReference type="DIP" id="DIP-3643N"/>
<dbReference type="FunCoup" id="P56128">
    <property type="interactions" value="354"/>
</dbReference>
<dbReference type="IntAct" id="P56128">
    <property type="interactions" value="2"/>
</dbReference>
<dbReference type="MINT" id="P56128"/>
<dbReference type="STRING" id="85962.HP_0319"/>
<dbReference type="PaxDb" id="85962-C694_01615"/>
<dbReference type="EnsemblBacteria" id="AAD07388">
    <property type="protein sequence ID" value="AAD07388"/>
    <property type="gene ID" value="HP_0319"/>
</dbReference>
<dbReference type="KEGG" id="heo:C694_01615"/>
<dbReference type="KEGG" id="hpy:HP_0319"/>
<dbReference type="PATRIC" id="fig|85962.47.peg.341"/>
<dbReference type="eggNOG" id="COG0018">
    <property type="taxonomic scope" value="Bacteria"/>
</dbReference>
<dbReference type="InParanoid" id="P56128"/>
<dbReference type="OrthoDB" id="9803211at2"/>
<dbReference type="PhylomeDB" id="P56128"/>
<dbReference type="Proteomes" id="UP000000429">
    <property type="component" value="Chromosome"/>
</dbReference>
<dbReference type="GO" id="GO:0005737">
    <property type="term" value="C:cytoplasm"/>
    <property type="evidence" value="ECO:0007669"/>
    <property type="project" value="UniProtKB-SubCell"/>
</dbReference>
<dbReference type="GO" id="GO:0004814">
    <property type="term" value="F:arginine-tRNA ligase activity"/>
    <property type="evidence" value="ECO:0000318"/>
    <property type="project" value="GO_Central"/>
</dbReference>
<dbReference type="GO" id="GO:0005524">
    <property type="term" value="F:ATP binding"/>
    <property type="evidence" value="ECO:0007669"/>
    <property type="project" value="UniProtKB-UniRule"/>
</dbReference>
<dbReference type="GO" id="GO:0006420">
    <property type="term" value="P:arginyl-tRNA aminoacylation"/>
    <property type="evidence" value="ECO:0000318"/>
    <property type="project" value="GO_Central"/>
</dbReference>
<dbReference type="CDD" id="cd00671">
    <property type="entry name" value="ArgRS_core"/>
    <property type="match status" value="1"/>
</dbReference>
<dbReference type="FunFam" id="3.30.1360.70:FF:000008">
    <property type="entry name" value="Arginine--tRNA ligase"/>
    <property type="match status" value="1"/>
</dbReference>
<dbReference type="FunFam" id="3.40.50.620:FF:000062">
    <property type="entry name" value="Arginine--tRNA ligase"/>
    <property type="match status" value="1"/>
</dbReference>
<dbReference type="Gene3D" id="3.30.1360.70">
    <property type="entry name" value="Arginyl tRNA synthetase N-terminal domain"/>
    <property type="match status" value="1"/>
</dbReference>
<dbReference type="Gene3D" id="3.40.50.620">
    <property type="entry name" value="HUPs"/>
    <property type="match status" value="1"/>
</dbReference>
<dbReference type="Gene3D" id="1.10.730.10">
    <property type="entry name" value="Isoleucyl-tRNA Synthetase, Domain 1"/>
    <property type="match status" value="1"/>
</dbReference>
<dbReference type="HAMAP" id="MF_00123">
    <property type="entry name" value="Arg_tRNA_synth"/>
    <property type="match status" value="1"/>
</dbReference>
<dbReference type="InterPro" id="IPR001412">
    <property type="entry name" value="aa-tRNA-synth_I_CS"/>
</dbReference>
<dbReference type="InterPro" id="IPR001278">
    <property type="entry name" value="Arg-tRNA-ligase"/>
</dbReference>
<dbReference type="InterPro" id="IPR005148">
    <property type="entry name" value="Arg-tRNA-synth_N"/>
</dbReference>
<dbReference type="InterPro" id="IPR036695">
    <property type="entry name" value="Arg-tRNA-synth_N_sf"/>
</dbReference>
<dbReference type="InterPro" id="IPR035684">
    <property type="entry name" value="ArgRS_core"/>
</dbReference>
<dbReference type="InterPro" id="IPR008909">
    <property type="entry name" value="DALR_anticod-bd"/>
</dbReference>
<dbReference type="InterPro" id="IPR014729">
    <property type="entry name" value="Rossmann-like_a/b/a_fold"/>
</dbReference>
<dbReference type="InterPro" id="IPR009080">
    <property type="entry name" value="tRNAsynth_Ia_anticodon-bd"/>
</dbReference>
<dbReference type="NCBIfam" id="TIGR00456">
    <property type="entry name" value="argS"/>
    <property type="match status" value="1"/>
</dbReference>
<dbReference type="PANTHER" id="PTHR11956:SF5">
    <property type="entry name" value="ARGININE--TRNA LIGASE, CYTOPLASMIC"/>
    <property type="match status" value="1"/>
</dbReference>
<dbReference type="PANTHER" id="PTHR11956">
    <property type="entry name" value="ARGINYL-TRNA SYNTHETASE"/>
    <property type="match status" value="1"/>
</dbReference>
<dbReference type="Pfam" id="PF03485">
    <property type="entry name" value="Arg_tRNA_synt_N"/>
    <property type="match status" value="1"/>
</dbReference>
<dbReference type="Pfam" id="PF05746">
    <property type="entry name" value="DALR_1"/>
    <property type="match status" value="1"/>
</dbReference>
<dbReference type="Pfam" id="PF00750">
    <property type="entry name" value="tRNA-synt_1d"/>
    <property type="match status" value="1"/>
</dbReference>
<dbReference type="PRINTS" id="PR01038">
    <property type="entry name" value="TRNASYNTHARG"/>
</dbReference>
<dbReference type="SMART" id="SM01016">
    <property type="entry name" value="Arg_tRNA_synt_N"/>
    <property type="match status" value="1"/>
</dbReference>
<dbReference type="SMART" id="SM00836">
    <property type="entry name" value="DALR_1"/>
    <property type="match status" value="1"/>
</dbReference>
<dbReference type="SUPFAM" id="SSF47323">
    <property type="entry name" value="Anticodon-binding domain of a subclass of class I aminoacyl-tRNA synthetases"/>
    <property type="match status" value="1"/>
</dbReference>
<dbReference type="SUPFAM" id="SSF55190">
    <property type="entry name" value="Arginyl-tRNA synthetase (ArgRS), N-terminal 'additional' domain"/>
    <property type="match status" value="1"/>
</dbReference>
<dbReference type="SUPFAM" id="SSF52374">
    <property type="entry name" value="Nucleotidylyl transferase"/>
    <property type="match status" value="1"/>
</dbReference>
<dbReference type="PROSITE" id="PS00178">
    <property type="entry name" value="AA_TRNA_LIGASE_I"/>
    <property type="match status" value="1"/>
</dbReference>
<protein>
    <recommendedName>
        <fullName>Arginine--tRNA ligase</fullName>
        <ecNumber>6.1.1.19</ecNumber>
    </recommendedName>
    <alternativeName>
        <fullName>Arginyl-tRNA synthetase</fullName>
        <shortName>ArgRS</shortName>
    </alternativeName>
</protein>
<evidence type="ECO:0000250" key="1"/>
<evidence type="ECO:0000305" key="2"/>
<reference key="1">
    <citation type="journal article" date="1997" name="Nature">
        <title>The complete genome sequence of the gastric pathogen Helicobacter pylori.</title>
        <authorList>
            <person name="Tomb J.-F."/>
            <person name="White O."/>
            <person name="Kerlavage A.R."/>
            <person name="Clayton R.A."/>
            <person name="Sutton G.G."/>
            <person name="Fleischmann R.D."/>
            <person name="Ketchum K.A."/>
            <person name="Klenk H.-P."/>
            <person name="Gill S.R."/>
            <person name="Dougherty B.A."/>
            <person name="Nelson K.E."/>
            <person name="Quackenbush J."/>
            <person name="Zhou L."/>
            <person name="Kirkness E.F."/>
            <person name="Peterson S.N."/>
            <person name="Loftus B.J."/>
            <person name="Richardson D.L."/>
            <person name="Dodson R.J."/>
            <person name="Khalak H.G."/>
            <person name="Glodek A."/>
            <person name="McKenney K."/>
            <person name="FitzGerald L.M."/>
            <person name="Lee N."/>
            <person name="Adams M.D."/>
            <person name="Hickey E.K."/>
            <person name="Berg D.E."/>
            <person name="Gocayne J.D."/>
            <person name="Utterback T.R."/>
            <person name="Peterson J.D."/>
            <person name="Kelley J.M."/>
            <person name="Cotton M.D."/>
            <person name="Weidman J.F."/>
            <person name="Fujii C."/>
            <person name="Bowman C."/>
            <person name="Watthey L."/>
            <person name="Wallin E."/>
            <person name="Hayes W.S."/>
            <person name="Borodovsky M."/>
            <person name="Karp P.D."/>
            <person name="Smith H.O."/>
            <person name="Fraser C.M."/>
            <person name="Venter J.C."/>
        </authorList>
    </citation>
    <scope>NUCLEOTIDE SEQUENCE [LARGE SCALE GENOMIC DNA]</scope>
    <source>
        <strain>ATCC 700392 / 26695</strain>
    </source>
</reference>
<sequence length="541" mass="62077">MHTLIKGILEEILEEEVIVEYPKDREHGHYATPIAFNLAKVFKKSPLAIAEELALKISTHEKTQGLFDSVVACKGYINFTLSLDFLERFTQKALELKEKFGSQVKSERSQKIFLEFVSANPTGPLHIGHARGAVFGDSLAKIARFLGHEVLCEYYVNDMGSQIRLLGLSVWLAYREHVLKESVTYPEVFYKGEYIIEIAKKANNDLEPSLLKENEETIIEVLSGYARDLMLLEIKDNLDALGIHFDSYASEKEVFKHKDAVFEQLEKANALYEKDSKIWLKSSLYQDESDRVLIKEDKSYTYLAGDIVYHDEKFKQDYTKYINIWGADHHGYIARVKASLEFLGYDSNKLEVLLAQMVRLLKDNEPYKMSKRAGNFILIKDVVDDVGKDALRFIFLSKRLDTHLEFDVNTLKKQDSSNPIYYIHYANSRIHTMLEKSPFSKEEVLQTPLTNLNAEEKYLLFSALSLPKAIESSFEEYGLQKMCEYAKTLASEFHRFYNAGKILDTPKAKELLKICLIVSLSLSNAFKLLGIEIKTKISARD</sequence>
<feature type="chain" id="PRO_0000151565" description="Arginine--tRNA ligase">
    <location>
        <begin position="1"/>
        <end position="541"/>
    </location>
</feature>
<feature type="short sequence motif" description="'HIGH' region">
    <location>
        <begin position="119"/>
        <end position="129"/>
    </location>
</feature>
<gene>
    <name type="primary">argS</name>
    <name type="ordered locus">HP_0319</name>
</gene>
<keyword id="KW-0030">Aminoacyl-tRNA synthetase</keyword>
<keyword id="KW-0067">ATP-binding</keyword>
<keyword id="KW-0963">Cytoplasm</keyword>
<keyword id="KW-0436">Ligase</keyword>
<keyword id="KW-0547">Nucleotide-binding</keyword>
<keyword id="KW-0648">Protein biosynthesis</keyword>
<keyword id="KW-1185">Reference proteome</keyword>
<comment type="catalytic activity">
    <reaction>
        <text>tRNA(Arg) + L-arginine + ATP = L-arginyl-tRNA(Arg) + AMP + diphosphate</text>
        <dbReference type="Rhea" id="RHEA:20301"/>
        <dbReference type="Rhea" id="RHEA-COMP:9658"/>
        <dbReference type="Rhea" id="RHEA-COMP:9673"/>
        <dbReference type="ChEBI" id="CHEBI:30616"/>
        <dbReference type="ChEBI" id="CHEBI:32682"/>
        <dbReference type="ChEBI" id="CHEBI:33019"/>
        <dbReference type="ChEBI" id="CHEBI:78442"/>
        <dbReference type="ChEBI" id="CHEBI:78513"/>
        <dbReference type="ChEBI" id="CHEBI:456215"/>
        <dbReference type="EC" id="6.1.1.19"/>
    </reaction>
</comment>
<comment type="subunit">
    <text evidence="1">Monomer.</text>
</comment>
<comment type="subcellular location">
    <subcellularLocation>
        <location evidence="1">Cytoplasm</location>
    </subcellularLocation>
</comment>
<comment type="similarity">
    <text evidence="2">Belongs to the class-I aminoacyl-tRNA synthetase family.</text>
</comment>
<name>SYR_HELPY</name>
<accession>P56128</accession>
<organism>
    <name type="scientific">Helicobacter pylori (strain ATCC 700392 / 26695)</name>
    <name type="common">Campylobacter pylori</name>
    <dbReference type="NCBI Taxonomy" id="85962"/>
    <lineage>
        <taxon>Bacteria</taxon>
        <taxon>Pseudomonadati</taxon>
        <taxon>Campylobacterota</taxon>
        <taxon>Epsilonproteobacteria</taxon>
        <taxon>Campylobacterales</taxon>
        <taxon>Helicobacteraceae</taxon>
        <taxon>Helicobacter</taxon>
    </lineage>
</organism>
<proteinExistence type="inferred from homology"/>